<comment type="function">
    <text evidence="1">Rho GTPase-activating protein involved in the signal transduction pathway.</text>
</comment>
<comment type="subcellular location">
    <subcellularLocation>
        <location>Cytoplasm</location>
    </subcellularLocation>
    <subcellularLocation>
        <location evidence="1">Contractile vacuole</location>
    </subcellularLocation>
</comment>
<evidence type="ECO:0000250" key="1"/>
<evidence type="ECO:0000255" key="2"/>
<evidence type="ECO:0000255" key="3">
    <source>
        <dbReference type="PROSITE-ProRule" id="PRU00172"/>
    </source>
</evidence>
<evidence type="ECO:0000255" key="4">
    <source>
        <dbReference type="PROSITE-ProRule" id="PRU01077"/>
    </source>
</evidence>
<evidence type="ECO:0000256" key="5">
    <source>
        <dbReference type="SAM" id="MobiDB-lite"/>
    </source>
</evidence>
<organism>
    <name type="scientific">Dictyostelium discoideum</name>
    <name type="common">Social amoeba</name>
    <dbReference type="NCBI Taxonomy" id="44689"/>
    <lineage>
        <taxon>Eukaryota</taxon>
        <taxon>Amoebozoa</taxon>
        <taxon>Evosea</taxon>
        <taxon>Eumycetozoa</taxon>
        <taxon>Dictyostelia</taxon>
        <taxon>Dictyosteliales</taxon>
        <taxon>Dictyosteliaceae</taxon>
        <taxon>Dictyostelium</taxon>
    </lineage>
</organism>
<sequence>MTVDNSQIPNLNQPESFADLWDGYENVSKATEKGVLLLKDITKFFKKRIQSEDEYSKTLSKLVLKFEPMAPDGYIGPRLKNTWDQIKLETLTHSNHHENICNNISTHIIEPIEGLIVDLEQKMKSIHVDAEKSFIHYQESVAKLKKAKQNYDRLCKDSFEITGVSKGETQKVQKRAIKAAQDVIKADKDYRAQINETNTSQKQFLTELIPKIMNDLQRLEMVRIHMVKSYFHRYFKSMESTPQKFNTETENLLNLINSINNEDEIQDFVRKSKTTHKYPKPFEYEPYLDRFTTPPPPPPPQISSPQLLSPRGDISIQHSSSSNSLPIFPTQHQLLSNKEKADNNITNSLSLSSDSLQTNLNNGNNGGNGNNGSNTPTKEKKPSSWGLKRFSTSVSSTSDRKLLNKQIQSIGLAHNGGNIFNCKIEDIMVAQKKKYPYLEIPFIVVFLKHKLVALDVFKTQGIFRVPGNVVDINSLKKRFDEGNYEVAPTENVYTIASLLKLWLREITEPLFPLTVYDQCIENSNKREKIFEIISSLPILNQKTISYIIELLQECGKSVNVEHNKMNFPNLAMVFSPCFLRCSHTDPNILLGNIFKEKEFVQNIIEHFKPLQVNDSLEGPPSSSSSSSTSINQSSIESPPTSPLRSSTNSNANKSSTPIKPSSPSQQQQQQQQQQQSSTPSTPLSSTTNTNVKHNILSPIVEQQSPNNGKQPIALTQTYSHLNIGSVPLIINTVNNNNQNQNQNQNQNQNQDQNQNQSKQPIQSSNQTQQQVSAPATPHTVAVNPKINQIKAETITTPQKSIGDGNGLIGQSPSAHLMSPSEVKRRSNAIYLEDQERCKQRIDELHTQVNELYSDITTIETTTYFAMQSSLLITKLTKSLESFLTIDMWNLTLQDIKEAIEKNKFVSPPPINFKIPSKMPKLSPIELVQNEQSSELLRSWLSNVTLTVNRINEYLCYLGGVVIRIHSPDTLFAISNLFTDYDLSPQQNPKFVSLTLEQSTIFIQKTLALLEPLNPFTSDELNINVKVQDTITPASFSPALISDPDCNSPPTISNTTNRLLNTSGSTDFSTTPLSSSPSTSSTSLSTNNNNNNNGNRNLDINNSPTIVITNSSLNKSALSTNNNNNNNNNNNNNPTTKLSSSTSSTSTTTTTNTNTNTTTNEKIAHAIISPSSSTTSFKFDDDEDEDEDLLEINNKLHSQLTEELKKKQQQYKQLIFDIIDMIKDKKKLMNSLDLTNSDSQLDIKSIAKLSLSLKRALDNFTSESGFDIEDEQDPIINKENDSFVNLKIMTSHFISRIVLILTTILSISNEFNSTLYQLLLPFNENNNNNNENNNINNQ</sequence>
<name>MGP3_DICDI</name>
<dbReference type="EMBL" id="AAFI02000005">
    <property type="protein sequence ID" value="EAL72162.1"/>
    <property type="molecule type" value="Genomic_DNA"/>
</dbReference>
<dbReference type="RefSeq" id="XP_646126.1">
    <property type="nucleotide sequence ID" value="XM_641034.1"/>
</dbReference>
<dbReference type="SMR" id="Q55DK5"/>
<dbReference type="FunCoup" id="Q55DK5">
    <property type="interactions" value="616"/>
</dbReference>
<dbReference type="PaxDb" id="44689-DDB0233874"/>
<dbReference type="EnsemblProtists" id="EAL72162">
    <property type="protein sequence ID" value="EAL72162"/>
    <property type="gene ID" value="DDB_G0269624"/>
</dbReference>
<dbReference type="GeneID" id="8617075"/>
<dbReference type="KEGG" id="ddi:DDB_G0269624"/>
<dbReference type="dictyBase" id="DDB_G0269624">
    <property type="gene designation" value="mgp3"/>
</dbReference>
<dbReference type="VEuPathDB" id="AmoebaDB:DDB_G0269624"/>
<dbReference type="eggNOG" id="KOG2398">
    <property type="taxonomic scope" value="Eukaryota"/>
</dbReference>
<dbReference type="HOGENOM" id="CLU_258661_0_0_1"/>
<dbReference type="InParanoid" id="Q55DK5"/>
<dbReference type="OMA" id="YLCYLGG"/>
<dbReference type="Reactome" id="R-DDI-9013148">
    <property type="pathway name" value="CDC42 GTPase cycle"/>
</dbReference>
<dbReference type="Reactome" id="R-DDI-9013149">
    <property type="pathway name" value="RAC1 GTPase cycle"/>
</dbReference>
<dbReference type="Reactome" id="R-DDI-9013404">
    <property type="pathway name" value="RAC2 GTPase cycle"/>
</dbReference>
<dbReference type="Reactome" id="R-DDI-9013423">
    <property type="pathway name" value="RAC3 GTPase cycle"/>
</dbReference>
<dbReference type="PRO" id="PR:Q55DK5"/>
<dbReference type="Proteomes" id="UP000002195">
    <property type="component" value="Chromosome 1"/>
</dbReference>
<dbReference type="GO" id="GO:0000331">
    <property type="term" value="C:contractile vacuole"/>
    <property type="evidence" value="ECO:0007669"/>
    <property type="project" value="UniProtKB-SubCell"/>
</dbReference>
<dbReference type="GO" id="GO:0005737">
    <property type="term" value="C:cytoplasm"/>
    <property type="evidence" value="ECO:0000318"/>
    <property type="project" value="GO_Central"/>
</dbReference>
<dbReference type="GO" id="GO:0005096">
    <property type="term" value="F:GTPase activator activity"/>
    <property type="evidence" value="ECO:0000318"/>
    <property type="project" value="GO_Central"/>
</dbReference>
<dbReference type="GO" id="GO:0007165">
    <property type="term" value="P:signal transduction"/>
    <property type="evidence" value="ECO:0007669"/>
    <property type="project" value="InterPro"/>
</dbReference>
<dbReference type="CDD" id="cd07610">
    <property type="entry name" value="FCH_F-BAR"/>
    <property type="match status" value="1"/>
</dbReference>
<dbReference type="CDD" id="cd04389">
    <property type="entry name" value="RhoGAP_KIAA1688"/>
    <property type="match status" value="1"/>
</dbReference>
<dbReference type="FunFam" id="1.20.1270.60:FF:000060">
    <property type="entry name" value="Actin polymerization protein Bzz1"/>
    <property type="match status" value="1"/>
</dbReference>
<dbReference type="FunFam" id="1.10.555.10:FF:000105">
    <property type="entry name" value="Mental retardation GTPase activating protein homolog 2"/>
    <property type="match status" value="1"/>
</dbReference>
<dbReference type="Gene3D" id="1.20.1270.60">
    <property type="entry name" value="Arfaptin homology (AH) domain/BAR domain"/>
    <property type="match status" value="1"/>
</dbReference>
<dbReference type="Gene3D" id="1.10.555.10">
    <property type="entry name" value="Rho GTPase activation protein"/>
    <property type="match status" value="1"/>
</dbReference>
<dbReference type="InterPro" id="IPR027267">
    <property type="entry name" value="AH/BAR_dom_sf"/>
</dbReference>
<dbReference type="InterPro" id="IPR031160">
    <property type="entry name" value="F_BAR"/>
</dbReference>
<dbReference type="InterPro" id="IPR001060">
    <property type="entry name" value="FCH_dom"/>
</dbReference>
<dbReference type="InterPro" id="IPR008936">
    <property type="entry name" value="Rho_GTPase_activation_prot"/>
</dbReference>
<dbReference type="InterPro" id="IPR000198">
    <property type="entry name" value="RhoGAP_dom"/>
</dbReference>
<dbReference type="PANTHER" id="PTHR45876">
    <property type="entry name" value="FI04035P"/>
    <property type="match status" value="1"/>
</dbReference>
<dbReference type="PANTHER" id="PTHR45876:SF11">
    <property type="entry name" value="GTPASE ACTIVATING PROTEIN HOMOLOG 3-RELATED"/>
    <property type="match status" value="1"/>
</dbReference>
<dbReference type="Pfam" id="PF00611">
    <property type="entry name" value="FCH"/>
    <property type="match status" value="1"/>
</dbReference>
<dbReference type="Pfam" id="PF00620">
    <property type="entry name" value="RhoGAP"/>
    <property type="match status" value="1"/>
</dbReference>
<dbReference type="SMART" id="SM00055">
    <property type="entry name" value="FCH"/>
    <property type="match status" value="1"/>
</dbReference>
<dbReference type="SMART" id="SM00324">
    <property type="entry name" value="RhoGAP"/>
    <property type="match status" value="1"/>
</dbReference>
<dbReference type="SUPFAM" id="SSF103657">
    <property type="entry name" value="BAR/IMD domain-like"/>
    <property type="match status" value="1"/>
</dbReference>
<dbReference type="SUPFAM" id="SSF48350">
    <property type="entry name" value="GTPase activation domain, GAP"/>
    <property type="match status" value="1"/>
</dbReference>
<dbReference type="PROSITE" id="PS51741">
    <property type="entry name" value="F_BAR"/>
    <property type="match status" value="1"/>
</dbReference>
<dbReference type="PROSITE" id="PS50238">
    <property type="entry name" value="RHOGAP"/>
    <property type="match status" value="1"/>
</dbReference>
<keyword id="KW-0175">Coiled coil</keyword>
<keyword id="KW-0963">Cytoplasm</keyword>
<keyword id="KW-0343">GTPase activation</keyword>
<keyword id="KW-1185">Reference proteome</keyword>
<keyword id="KW-0926">Vacuole</keyword>
<accession>Q55DK5</accession>
<proteinExistence type="inferred from homology"/>
<gene>
    <name type="primary">mgp3</name>
    <name type="synonym">gacAA</name>
    <name type="ORF">DDB_G0269624</name>
</gene>
<feature type="chain" id="PRO_0000380226" description="GTPase activating protein homolog 3">
    <location>
        <begin position="1"/>
        <end position="1337"/>
    </location>
</feature>
<feature type="domain" description="F-BAR" evidence="4">
    <location>
        <begin position="14"/>
        <end position="264"/>
    </location>
</feature>
<feature type="domain" description="Rho-GAP" evidence="3">
    <location>
        <begin position="422"/>
        <end position="611"/>
    </location>
</feature>
<feature type="region of interest" description="Disordered" evidence="5">
    <location>
        <begin position="279"/>
        <end position="328"/>
    </location>
</feature>
<feature type="region of interest" description="Disordered" evidence="5">
    <location>
        <begin position="345"/>
        <end position="392"/>
    </location>
</feature>
<feature type="region of interest" description="Disordered" evidence="5">
    <location>
        <begin position="612"/>
        <end position="689"/>
    </location>
</feature>
<feature type="region of interest" description="Disordered" evidence="5">
    <location>
        <begin position="733"/>
        <end position="781"/>
    </location>
</feature>
<feature type="region of interest" description="Disordered" evidence="5">
    <location>
        <begin position="794"/>
        <end position="821"/>
    </location>
</feature>
<feature type="region of interest" description="Disordered" evidence="5">
    <location>
        <begin position="1041"/>
        <end position="1102"/>
    </location>
</feature>
<feature type="region of interest" description="Disordered" evidence="5">
    <location>
        <begin position="1114"/>
        <end position="1166"/>
    </location>
</feature>
<feature type="coiled-coil region" evidence="2">
    <location>
        <begin position="830"/>
        <end position="859"/>
    </location>
</feature>
<feature type="coiled-coil region" evidence="2">
    <location>
        <begin position="1189"/>
        <end position="1219"/>
    </location>
</feature>
<feature type="compositionally biased region" description="Pro residues" evidence="5">
    <location>
        <begin position="293"/>
        <end position="302"/>
    </location>
</feature>
<feature type="compositionally biased region" description="Polar residues" evidence="5">
    <location>
        <begin position="345"/>
        <end position="358"/>
    </location>
</feature>
<feature type="compositionally biased region" description="Low complexity" evidence="5">
    <location>
        <begin position="621"/>
        <end position="637"/>
    </location>
</feature>
<feature type="compositionally biased region" description="Low complexity" evidence="5">
    <location>
        <begin position="645"/>
        <end position="687"/>
    </location>
</feature>
<feature type="compositionally biased region" description="Low complexity" evidence="5">
    <location>
        <begin position="734"/>
        <end position="772"/>
    </location>
</feature>
<feature type="compositionally biased region" description="Polar residues" evidence="5">
    <location>
        <begin position="1047"/>
        <end position="1063"/>
    </location>
</feature>
<feature type="compositionally biased region" description="Low complexity" evidence="5">
    <location>
        <begin position="1064"/>
        <end position="1102"/>
    </location>
</feature>
<feature type="compositionally biased region" description="Low complexity" evidence="5">
    <location>
        <begin position="1114"/>
        <end position="1159"/>
    </location>
</feature>
<feature type="site" description="Arginine finger; crucial for GTP hydrolysis by stabilizing the transition state" evidence="3">
    <location>
        <position position="464"/>
    </location>
</feature>
<protein>
    <recommendedName>
        <fullName>GTPase activating protein homolog 3</fullName>
    </recommendedName>
    <alternativeName>
        <fullName>GTPase activating factor for raC protein AA</fullName>
    </alternativeName>
    <alternativeName>
        <fullName>Rho GTPase-activating protein gacAA</fullName>
    </alternativeName>
</protein>
<reference key="1">
    <citation type="journal article" date="2005" name="Nature">
        <title>The genome of the social amoeba Dictyostelium discoideum.</title>
        <authorList>
            <person name="Eichinger L."/>
            <person name="Pachebat J.A."/>
            <person name="Gloeckner G."/>
            <person name="Rajandream M.A."/>
            <person name="Sucgang R."/>
            <person name="Berriman M."/>
            <person name="Song J."/>
            <person name="Olsen R."/>
            <person name="Szafranski K."/>
            <person name="Xu Q."/>
            <person name="Tunggal B."/>
            <person name="Kummerfeld S."/>
            <person name="Madera M."/>
            <person name="Konfortov B.A."/>
            <person name="Rivero F."/>
            <person name="Bankier A.T."/>
            <person name="Lehmann R."/>
            <person name="Hamlin N."/>
            <person name="Davies R."/>
            <person name="Gaudet P."/>
            <person name="Fey P."/>
            <person name="Pilcher K."/>
            <person name="Chen G."/>
            <person name="Saunders D."/>
            <person name="Sodergren E.J."/>
            <person name="Davis P."/>
            <person name="Kerhornou A."/>
            <person name="Nie X."/>
            <person name="Hall N."/>
            <person name="Anjard C."/>
            <person name="Hemphill L."/>
            <person name="Bason N."/>
            <person name="Farbrother P."/>
            <person name="Desany B."/>
            <person name="Just E."/>
            <person name="Morio T."/>
            <person name="Rost R."/>
            <person name="Churcher C.M."/>
            <person name="Cooper J."/>
            <person name="Haydock S."/>
            <person name="van Driessche N."/>
            <person name="Cronin A."/>
            <person name="Goodhead I."/>
            <person name="Muzny D.M."/>
            <person name="Mourier T."/>
            <person name="Pain A."/>
            <person name="Lu M."/>
            <person name="Harper D."/>
            <person name="Lindsay R."/>
            <person name="Hauser H."/>
            <person name="James K.D."/>
            <person name="Quiles M."/>
            <person name="Madan Babu M."/>
            <person name="Saito T."/>
            <person name="Buchrieser C."/>
            <person name="Wardroper A."/>
            <person name="Felder M."/>
            <person name="Thangavelu M."/>
            <person name="Johnson D."/>
            <person name="Knights A."/>
            <person name="Loulseged H."/>
            <person name="Mungall K.L."/>
            <person name="Oliver K."/>
            <person name="Price C."/>
            <person name="Quail M.A."/>
            <person name="Urushihara H."/>
            <person name="Hernandez J."/>
            <person name="Rabbinowitsch E."/>
            <person name="Steffen D."/>
            <person name="Sanders M."/>
            <person name="Ma J."/>
            <person name="Kohara Y."/>
            <person name="Sharp S."/>
            <person name="Simmonds M.N."/>
            <person name="Spiegler S."/>
            <person name="Tivey A."/>
            <person name="Sugano S."/>
            <person name="White B."/>
            <person name="Walker D."/>
            <person name="Woodward J.R."/>
            <person name="Winckler T."/>
            <person name="Tanaka Y."/>
            <person name="Shaulsky G."/>
            <person name="Schleicher M."/>
            <person name="Weinstock G.M."/>
            <person name="Rosenthal A."/>
            <person name="Cox E.C."/>
            <person name="Chisholm R.L."/>
            <person name="Gibbs R.A."/>
            <person name="Loomis W.F."/>
            <person name="Platzer M."/>
            <person name="Kay R.R."/>
            <person name="Williams J.G."/>
            <person name="Dear P.H."/>
            <person name="Noegel A.A."/>
            <person name="Barrell B.G."/>
            <person name="Kuspa A."/>
        </authorList>
    </citation>
    <scope>NUCLEOTIDE SEQUENCE [LARGE SCALE GENOMIC DNA]</scope>
    <source>
        <strain>AX4</strain>
    </source>
</reference>
<reference key="2">
    <citation type="journal article" date="2008" name="J. Cell Sci.">
        <title>Dictyostelium MEGAPs: F-BAR domain proteins that regulate motility and membrane tubulation in contractile vacuoles.</title>
        <authorList>
            <person name="Heath R.J."/>
            <person name="Insall R.H."/>
        </authorList>
    </citation>
    <scope>IDENTIFICATION</scope>
</reference>